<name>Y2579_BURO0</name>
<organism>
    <name type="scientific">Burkholderia orbicola (strain MC0-3)</name>
    <dbReference type="NCBI Taxonomy" id="406425"/>
    <lineage>
        <taxon>Bacteria</taxon>
        <taxon>Pseudomonadati</taxon>
        <taxon>Pseudomonadota</taxon>
        <taxon>Betaproteobacteria</taxon>
        <taxon>Burkholderiales</taxon>
        <taxon>Burkholderiaceae</taxon>
        <taxon>Burkholderia</taxon>
        <taxon>Burkholderia cepacia complex</taxon>
        <taxon>Burkholderia orbicola</taxon>
    </lineage>
</organism>
<keyword id="KW-0547">Nucleotide-binding</keyword>
<proteinExistence type="inferred from homology"/>
<feature type="chain" id="PRO_1000130605" description="Nucleotide-binding protein Bcenmc03_2579">
    <location>
        <begin position="1"/>
        <end position="161"/>
    </location>
</feature>
<dbReference type="EMBL" id="CP000958">
    <property type="protein sequence ID" value="ACA91740.1"/>
    <property type="molecule type" value="Genomic_DNA"/>
</dbReference>
<dbReference type="RefSeq" id="WP_006478013.1">
    <property type="nucleotide sequence ID" value="NC_010508.1"/>
</dbReference>
<dbReference type="SMR" id="B1JXG5"/>
<dbReference type="GeneID" id="83049367"/>
<dbReference type="KEGG" id="bcm:Bcenmc03_2579"/>
<dbReference type="HOGENOM" id="CLU_099839_1_0_4"/>
<dbReference type="Proteomes" id="UP000002169">
    <property type="component" value="Chromosome 1"/>
</dbReference>
<dbReference type="GO" id="GO:0005829">
    <property type="term" value="C:cytosol"/>
    <property type="evidence" value="ECO:0007669"/>
    <property type="project" value="TreeGrafter"/>
</dbReference>
<dbReference type="GO" id="GO:0000166">
    <property type="term" value="F:nucleotide binding"/>
    <property type="evidence" value="ECO:0007669"/>
    <property type="project" value="TreeGrafter"/>
</dbReference>
<dbReference type="CDD" id="cd11740">
    <property type="entry name" value="YajQ_like"/>
    <property type="match status" value="1"/>
</dbReference>
<dbReference type="Gene3D" id="3.30.70.990">
    <property type="entry name" value="YajQ-like, domain 2"/>
    <property type="match status" value="1"/>
</dbReference>
<dbReference type="HAMAP" id="MF_00632">
    <property type="entry name" value="YajQ"/>
    <property type="match status" value="1"/>
</dbReference>
<dbReference type="InterPro" id="IPR007551">
    <property type="entry name" value="DUF520"/>
</dbReference>
<dbReference type="InterPro" id="IPR035570">
    <property type="entry name" value="UPF0234_N"/>
</dbReference>
<dbReference type="InterPro" id="IPR036183">
    <property type="entry name" value="YajQ-like_sf"/>
</dbReference>
<dbReference type="NCBIfam" id="NF003819">
    <property type="entry name" value="PRK05412.1"/>
    <property type="match status" value="1"/>
</dbReference>
<dbReference type="PANTHER" id="PTHR30476">
    <property type="entry name" value="UPF0234 PROTEIN YAJQ"/>
    <property type="match status" value="1"/>
</dbReference>
<dbReference type="PANTHER" id="PTHR30476:SF0">
    <property type="entry name" value="UPF0234 PROTEIN YAJQ"/>
    <property type="match status" value="1"/>
</dbReference>
<dbReference type="Pfam" id="PF04461">
    <property type="entry name" value="DUF520"/>
    <property type="match status" value="1"/>
</dbReference>
<dbReference type="SUPFAM" id="SSF89963">
    <property type="entry name" value="YajQ-like"/>
    <property type="match status" value="2"/>
</dbReference>
<reference key="1">
    <citation type="submission" date="2008-02" db="EMBL/GenBank/DDBJ databases">
        <title>Complete sequence of chromosome 1 of Burkholderia cenocepacia MC0-3.</title>
        <authorList>
            <person name="Copeland A."/>
            <person name="Lucas S."/>
            <person name="Lapidus A."/>
            <person name="Barry K."/>
            <person name="Bruce D."/>
            <person name="Goodwin L."/>
            <person name="Glavina del Rio T."/>
            <person name="Dalin E."/>
            <person name="Tice H."/>
            <person name="Pitluck S."/>
            <person name="Chain P."/>
            <person name="Malfatti S."/>
            <person name="Shin M."/>
            <person name="Vergez L."/>
            <person name="Schmutz J."/>
            <person name="Larimer F."/>
            <person name="Land M."/>
            <person name="Hauser L."/>
            <person name="Kyrpides N."/>
            <person name="Mikhailova N."/>
            <person name="Tiedje J."/>
            <person name="Richardson P."/>
        </authorList>
    </citation>
    <scope>NUCLEOTIDE SEQUENCE [LARGE SCALE GENOMIC DNA]</scope>
    <source>
        <strain>MC0-3</strain>
    </source>
</reference>
<accession>B1JXG5</accession>
<protein>
    <recommendedName>
        <fullName evidence="1">Nucleotide-binding protein Bcenmc03_2579</fullName>
    </recommendedName>
</protein>
<evidence type="ECO:0000255" key="1">
    <source>
        <dbReference type="HAMAP-Rule" id="MF_00632"/>
    </source>
</evidence>
<gene>
    <name type="ordered locus">Bcenmc03_2579</name>
</gene>
<sequence length="161" mass="18064">MPSFDVVSEANMIEVKNAIEQSNKEISTRFDFKGSDARVEQKERELTLFADDDFKLGQVKDVLIGKLAKRNVDVRFLDYGKVEKIGGDKVKQVVTVKKGVTGDLAKKIVRLVKDSKIKVQASIQGDAVRISGTKRDDLQSTIAMLRKDVTDTPLDFNNFRD</sequence>
<comment type="function">
    <text evidence="1">Nucleotide-binding protein.</text>
</comment>
<comment type="similarity">
    <text evidence="1">Belongs to the YajQ family.</text>
</comment>